<feature type="transit peptide" description="Chloroplast" evidence="18">
    <location>
        <begin position="1"/>
        <end position="70"/>
    </location>
</feature>
<feature type="chain" id="PRO_0000308978" description="ATP-dependent Clp protease proteolytic subunit 3, chloroplastic">
    <location>
        <begin position="71"/>
        <end position="309"/>
    </location>
</feature>
<feature type="region of interest" description="Disordered" evidence="2">
    <location>
        <begin position="290"/>
        <end position="309"/>
    </location>
</feature>
<feature type="compositionally biased region" description="Polar residues" evidence="2">
    <location>
        <begin position="292"/>
        <end position="309"/>
    </location>
</feature>
<feature type="active site" description="Nucleophile" evidence="1">
    <location>
        <position position="164"/>
    </location>
</feature>
<feature type="active site" evidence="1">
    <location>
        <position position="189"/>
    </location>
</feature>
<feature type="modified residue" description="N-acetylvaline" evidence="18">
    <location>
        <position position="71"/>
    </location>
</feature>
<feature type="modified residue" description="Phosphothreonine" evidence="17">
    <location>
        <position position="194"/>
    </location>
</feature>
<feature type="sequence conflict" description="In Ref. 1; AAC35489." evidence="13" ref="1">
    <original>MEMS</original>
    <variation>NSARG</variation>
    <location>
        <begin position="1"/>
        <end position="4"/>
    </location>
</feature>
<feature type="sequence conflict" description="In Ref. 5; AAK48955/AAL66941." evidence="13" ref="5">
    <original>K</original>
    <variation>E</variation>
    <location>
        <position position="289"/>
    </location>
</feature>
<organism>
    <name type="scientific">Arabidopsis thaliana</name>
    <name type="common">Mouse-ear cress</name>
    <dbReference type="NCBI Taxonomy" id="3702"/>
    <lineage>
        <taxon>Eukaryota</taxon>
        <taxon>Viridiplantae</taxon>
        <taxon>Streptophyta</taxon>
        <taxon>Embryophyta</taxon>
        <taxon>Tracheophyta</taxon>
        <taxon>Spermatophyta</taxon>
        <taxon>Magnoliopsida</taxon>
        <taxon>eudicotyledons</taxon>
        <taxon>Gunneridae</taxon>
        <taxon>Pentapetalae</taxon>
        <taxon>rosids</taxon>
        <taxon>malvids</taxon>
        <taxon>Brassicales</taxon>
        <taxon>Brassicaceae</taxon>
        <taxon>Camelineae</taxon>
        <taxon>Arabidopsis</taxon>
    </lineage>
</organism>
<proteinExistence type="evidence at protein level"/>
<keyword id="KW-0007">Acetylation</keyword>
<keyword id="KW-0150">Chloroplast</keyword>
<keyword id="KW-0903">Direct protein sequencing</keyword>
<keyword id="KW-0378">Hydrolase</keyword>
<keyword id="KW-0597">Phosphoprotein</keyword>
<keyword id="KW-0934">Plastid</keyword>
<keyword id="KW-0645">Protease</keyword>
<keyword id="KW-1185">Reference proteome</keyword>
<keyword id="KW-0720">Serine protease</keyword>
<keyword id="KW-0809">Transit peptide</keyword>
<keyword id="KW-0832">Ubl conjugation</keyword>
<gene>
    <name evidence="12" type="primary">CLPP3</name>
    <name type="synonym">CLP</name>
    <name type="synonym">NCLPP3</name>
    <name type="synonym">NCLPP4</name>
    <name evidence="14" type="ordered locus">At1g66670</name>
    <name evidence="16" type="ORF">F4N21.19</name>
    <name evidence="15" type="ORF">T12I7.12</name>
</gene>
<reference key="1">
    <citation type="journal article" date="1998" name="Sex. Plant Reprod.">
        <title>A ClpP homolog linked to the Brassica self-incompatibility (S) locus.</title>
        <authorList>
            <person name="Letham D.L.D."/>
            <person name="Nasrallah J.B."/>
        </authorList>
        <dbReference type="AGRICOLA" id="IND22014948"/>
    </citation>
    <scope>NUCLEOTIDE SEQUENCE [MRNA]</scope>
</reference>
<reference key="2">
    <citation type="journal article" date="1999" name="Plant Cell Physiol.">
        <title>Identification of clp genes expressed in senescing Arabidopsis leaves.</title>
        <authorList>
            <person name="Nakabayashi K."/>
            <person name="Ito M."/>
            <person name="Kiyosue T."/>
            <person name="Shinozaki K."/>
            <person name="Watanabe A."/>
        </authorList>
    </citation>
    <scope>NUCLEOTIDE SEQUENCE [MRNA]</scope>
    <scope>INDUCTION</scope>
    <source>
        <strain>cv. Columbia</strain>
    </source>
</reference>
<reference key="3">
    <citation type="journal article" date="2000" name="Nature">
        <title>Sequence and analysis of chromosome 1 of the plant Arabidopsis thaliana.</title>
        <authorList>
            <person name="Theologis A."/>
            <person name="Ecker J.R."/>
            <person name="Palm C.J."/>
            <person name="Federspiel N.A."/>
            <person name="Kaul S."/>
            <person name="White O."/>
            <person name="Alonso J."/>
            <person name="Altafi H."/>
            <person name="Araujo R."/>
            <person name="Bowman C.L."/>
            <person name="Brooks S.Y."/>
            <person name="Buehler E."/>
            <person name="Chan A."/>
            <person name="Chao Q."/>
            <person name="Chen H."/>
            <person name="Cheuk R.F."/>
            <person name="Chin C.W."/>
            <person name="Chung M.K."/>
            <person name="Conn L."/>
            <person name="Conway A.B."/>
            <person name="Conway A.R."/>
            <person name="Creasy T.H."/>
            <person name="Dewar K."/>
            <person name="Dunn P."/>
            <person name="Etgu P."/>
            <person name="Feldblyum T.V."/>
            <person name="Feng J.-D."/>
            <person name="Fong B."/>
            <person name="Fujii C.Y."/>
            <person name="Gill J.E."/>
            <person name="Goldsmith A.D."/>
            <person name="Haas B."/>
            <person name="Hansen N.F."/>
            <person name="Hughes B."/>
            <person name="Huizar L."/>
            <person name="Hunter J.L."/>
            <person name="Jenkins J."/>
            <person name="Johnson-Hopson C."/>
            <person name="Khan S."/>
            <person name="Khaykin E."/>
            <person name="Kim C.J."/>
            <person name="Koo H.L."/>
            <person name="Kremenetskaia I."/>
            <person name="Kurtz D.B."/>
            <person name="Kwan A."/>
            <person name="Lam B."/>
            <person name="Langin-Hooper S."/>
            <person name="Lee A."/>
            <person name="Lee J.M."/>
            <person name="Lenz C.A."/>
            <person name="Li J.H."/>
            <person name="Li Y.-P."/>
            <person name="Lin X."/>
            <person name="Liu S.X."/>
            <person name="Liu Z.A."/>
            <person name="Luros J.S."/>
            <person name="Maiti R."/>
            <person name="Marziali A."/>
            <person name="Militscher J."/>
            <person name="Miranda M."/>
            <person name="Nguyen M."/>
            <person name="Nierman W.C."/>
            <person name="Osborne B.I."/>
            <person name="Pai G."/>
            <person name="Peterson J."/>
            <person name="Pham P.K."/>
            <person name="Rizzo M."/>
            <person name="Rooney T."/>
            <person name="Rowley D."/>
            <person name="Sakano H."/>
            <person name="Salzberg S.L."/>
            <person name="Schwartz J.R."/>
            <person name="Shinn P."/>
            <person name="Southwick A.M."/>
            <person name="Sun H."/>
            <person name="Tallon L.J."/>
            <person name="Tambunga G."/>
            <person name="Toriumi M.J."/>
            <person name="Town C.D."/>
            <person name="Utterback T."/>
            <person name="Van Aken S."/>
            <person name="Vaysberg M."/>
            <person name="Vysotskaia V.S."/>
            <person name="Walker M."/>
            <person name="Wu D."/>
            <person name="Yu G."/>
            <person name="Fraser C.M."/>
            <person name="Venter J.C."/>
            <person name="Davis R.W."/>
        </authorList>
    </citation>
    <scope>NUCLEOTIDE SEQUENCE [LARGE SCALE GENOMIC DNA]</scope>
    <source>
        <strain>cv. Columbia</strain>
    </source>
</reference>
<reference key="4">
    <citation type="journal article" date="2017" name="Plant J.">
        <title>Araport11: a complete reannotation of the Arabidopsis thaliana reference genome.</title>
        <authorList>
            <person name="Cheng C.Y."/>
            <person name="Krishnakumar V."/>
            <person name="Chan A.P."/>
            <person name="Thibaud-Nissen F."/>
            <person name="Schobel S."/>
            <person name="Town C.D."/>
        </authorList>
    </citation>
    <scope>GENOME REANNOTATION</scope>
    <source>
        <strain>cv. Columbia</strain>
    </source>
</reference>
<reference key="5">
    <citation type="journal article" date="2003" name="Science">
        <title>Empirical analysis of transcriptional activity in the Arabidopsis genome.</title>
        <authorList>
            <person name="Yamada K."/>
            <person name="Lim J."/>
            <person name="Dale J.M."/>
            <person name="Chen H."/>
            <person name="Shinn P."/>
            <person name="Palm C.J."/>
            <person name="Southwick A.M."/>
            <person name="Wu H.C."/>
            <person name="Kim C.J."/>
            <person name="Nguyen M."/>
            <person name="Pham P.K."/>
            <person name="Cheuk R.F."/>
            <person name="Karlin-Newmann G."/>
            <person name="Liu S.X."/>
            <person name="Lam B."/>
            <person name="Sakano H."/>
            <person name="Wu T."/>
            <person name="Yu G."/>
            <person name="Miranda M."/>
            <person name="Quach H.L."/>
            <person name="Tripp M."/>
            <person name="Chang C.H."/>
            <person name="Lee J.M."/>
            <person name="Toriumi M.J."/>
            <person name="Chan M.M."/>
            <person name="Tang C.C."/>
            <person name="Onodera C.S."/>
            <person name="Deng J.M."/>
            <person name="Akiyama K."/>
            <person name="Ansari Y."/>
            <person name="Arakawa T."/>
            <person name="Banh J."/>
            <person name="Banno F."/>
            <person name="Bowser L."/>
            <person name="Brooks S.Y."/>
            <person name="Carninci P."/>
            <person name="Chao Q."/>
            <person name="Choy N."/>
            <person name="Enju A."/>
            <person name="Goldsmith A.D."/>
            <person name="Gurjal M."/>
            <person name="Hansen N.F."/>
            <person name="Hayashizaki Y."/>
            <person name="Johnson-Hopson C."/>
            <person name="Hsuan V.W."/>
            <person name="Iida K."/>
            <person name="Karnes M."/>
            <person name="Khan S."/>
            <person name="Koesema E."/>
            <person name="Ishida J."/>
            <person name="Jiang P.X."/>
            <person name="Jones T."/>
            <person name="Kawai J."/>
            <person name="Kamiya A."/>
            <person name="Meyers C."/>
            <person name="Nakajima M."/>
            <person name="Narusaka M."/>
            <person name="Seki M."/>
            <person name="Sakurai T."/>
            <person name="Satou M."/>
            <person name="Tamse R."/>
            <person name="Vaysberg M."/>
            <person name="Wallender E.K."/>
            <person name="Wong C."/>
            <person name="Yamamura Y."/>
            <person name="Yuan S."/>
            <person name="Shinozaki K."/>
            <person name="Davis R.W."/>
            <person name="Theologis A."/>
            <person name="Ecker J.R."/>
        </authorList>
    </citation>
    <scope>NUCLEOTIDE SEQUENCE [LARGE SCALE MRNA]</scope>
    <source>
        <strain>cv. Columbia</strain>
    </source>
</reference>
<reference key="6">
    <citation type="submission" date="2002-03" db="EMBL/GenBank/DDBJ databases">
        <title>Full-length cDNA from Arabidopsis thaliana.</title>
        <authorList>
            <person name="Brover V.V."/>
            <person name="Troukhan M.E."/>
            <person name="Alexandrov N.A."/>
            <person name="Lu Y.-P."/>
            <person name="Flavell R.B."/>
            <person name="Feldmann K.A."/>
        </authorList>
    </citation>
    <scope>NUCLEOTIDE SEQUENCE [LARGE SCALE MRNA]</scope>
</reference>
<reference key="7">
    <citation type="journal article" date="2001" name="J. Biol. Chem.">
        <title>Identification of a 350-kDa ClpP protease complex with 10 different Clp isoforms in chloroplasts of Arabidopsis thaliana.</title>
        <authorList>
            <person name="Peltier J.-B."/>
            <person name="Ytterberg J."/>
            <person name="Liberles D.A."/>
            <person name="Roepstorff P."/>
            <person name="van Wijk K.J."/>
        </authorList>
    </citation>
    <scope>PROTEIN SEQUENCE OF 238-260</scope>
    <scope>SUBUNIT</scope>
    <scope>IDENTIFICATION BY MASS SPECTROMETRY</scope>
</reference>
<reference key="8">
    <citation type="journal article" date="2001" name="Plant Physiol.">
        <title>Chloroplast and mitochondrial proteases in Arabidopsis. A proposed nomenclature.</title>
        <authorList>
            <person name="Adam Z."/>
            <person name="Adamska I."/>
            <person name="Nakabayashi K."/>
            <person name="Ostersetzer O."/>
            <person name="Haussuhl K."/>
            <person name="Manuell A."/>
            <person name="Zheng B."/>
            <person name="Vallon O."/>
            <person name="Rodermel S.R."/>
            <person name="Shinozaki K."/>
            <person name="Clarke A.K."/>
        </authorList>
    </citation>
    <scope>GENE FAMILY</scope>
    <scope>NOMENCLATURE</scope>
</reference>
<reference key="9">
    <citation type="journal article" date="2002" name="Physiol. Plantarum">
        <title>Characterization of chloroplast Clp proteins in Arabidopsis: localization, tissue specificity and stress responses.</title>
        <authorList>
            <person name="Zheng B."/>
            <person name="Halperin T."/>
            <person name="Hruskova-Heidingsfeldova O."/>
            <person name="Adam Z."/>
            <person name="Clarke A.K."/>
        </authorList>
    </citation>
    <scope>SUBCELLULAR LOCATION</scope>
    <scope>INDUCTION</scope>
    <scope>TISSUE SPECIFICITY</scope>
    <source>
        <strain>cv. Columbia</strain>
        <tissue>Seedling</tissue>
    </source>
</reference>
<reference key="10">
    <citation type="journal article" date="2004" name="J. Biol. Chem.">
        <title>Clp protease complexes from photosynthetic and non-photosynthetic plastids and mitochondria of plants, their predicted three-dimensional structures, and functional implications.</title>
        <authorList>
            <person name="Peltier J.-B."/>
            <person name="Ripoll D.R."/>
            <person name="Friso G."/>
            <person name="Rudella A."/>
            <person name="Cai Y."/>
            <person name="Ytterberg J."/>
            <person name="Giacomelli L."/>
            <person name="Pillardy J."/>
            <person name="van Wijk K.J."/>
        </authorList>
    </citation>
    <scope>IDENTIFICATION BY MASS SPECTROMETRY</scope>
    <scope>SUBUNIT</scope>
    <scope>SUBCELLULAR LOCATION</scope>
    <scope>3D-STRUCTURE MODELING</scope>
</reference>
<reference key="11">
    <citation type="journal article" date="2005" name="Physiol. Plantarum">
        <title>The ATP-dependent Clp protease in chloroplasts of higher plants.</title>
        <authorList>
            <person name="Clarke A.K."/>
            <person name="MacDonald T.M."/>
            <person name="Sjoegren L.L."/>
        </authorList>
    </citation>
    <scope>NOMENCLATURE</scope>
</reference>
<reference key="12">
    <citation type="journal article" date="2006" name="Plant Cell">
        <title>Downregulation of ClpR2 leads to reduced accumulation of the ClpPRS protease complex and defects in chloroplast biogenesis in Arabidopsis.</title>
        <authorList>
            <person name="Rudella A."/>
            <person name="Friso G."/>
            <person name="Alonso J.M."/>
            <person name="Ecker J.R."/>
            <person name="van Wijk K.J."/>
        </authorList>
    </citation>
    <scope>IDENTIFICATION BY MASS SPECTROMETRY</scope>
    <scope>SUBUNIT</scope>
</reference>
<reference key="13">
    <citation type="journal article" date="2006" name="Plant Cell">
        <title>Structural and functional insights into the chloroplast ATP-dependent Clp protease in Arabidopsis.</title>
        <authorList>
            <person name="Sjoegren L.L.E."/>
            <person name="Stanne T.M."/>
            <person name="Zheng B."/>
            <person name="Sutinen S."/>
            <person name="Clarke A.K."/>
        </authorList>
    </citation>
    <scope>SUBUNIT</scope>
</reference>
<reference key="14">
    <citation type="journal article" date="2009" name="Plant Physiol.">
        <title>Large-scale Arabidopsis phosphoproteome profiling reveals novel chloroplast kinase substrates and phosphorylation networks.</title>
        <authorList>
            <person name="Reiland S."/>
            <person name="Messerli G."/>
            <person name="Baerenfaller K."/>
            <person name="Gerrits B."/>
            <person name="Endler A."/>
            <person name="Grossmann J."/>
            <person name="Gruissem W."/>
            <person name="Baginsky S."/>
        </authorList>
    </citation>
    <scope>PHOSPHORYLATION [LARGE SCALE ANALYSIS] AT THR-194</scope>
    <scope>IDENTIFICATION BY MASS SPECTROMETRY [LARGE SCALE ANALYSIS]</scope>
</reference>
<reference key="15">
    <citation type="journal article" date="2011" name="Plant Cell">
        <title>Subunit stoichiometry, evolution, and functional implications of an asymmetric plant plastid ClpP/R protease complex in Arabidopsis.</title>
        <authorList>
            <person name="Olinares P.D."/>
            <person name="Kim J."/>
            <person name="Davis J.I."/>
            <person name="van Wijk K.J."/>
        </authorList>
    </citation>
    <scope>IDENTIFICATION BY MASS SPECTROMETRY</scope>
    <scope>SUBUNIT</scope>
</reference>
<reference key="16">
    <citation type="journal article" date="2012" name="Mol. Cell. Proteomics">
        <title>Comparative large-scale characterisation of plant vs. mammal proteins reveals similar and idiosyncratic N-alpha acetylation features.</title>
        <authorList>
            <person name="Bienvenut W.V."/>
            <person name="Sumpton D."/>
            <person name="Martinez A."/>
            <person name="Lilla S."/>
            <person name="Espagne C."/>
            <person name="Meinnel T."/>
            <person name="Giglione C."/>
        </authorList>
    </citation>
    <scope>ACETYLATION [LARGE SCALE ANALYSIS] AT VAL-71</scope>
    <scope>CLEAVAGE OF TRANSIT PEPTIDE [LARGE SCALE ANALYSIS] AFTER SER-70</scope>
    <scope>IDENTIFICATION BY MASS SPECTROMETRY [LARGE SCALE ANALYSIS]</scope>
</reference>
<reference key="17">
    <citation type="journal article" date="2012" name="Physiol. Plantarum">
        <title>The chloroplast ATP-dependent Clp protease in vascular plants - new dimensions and future challenges.</title>
        <authorList>
            <person name="Clarke A.K."/>
        </authorList>
    </citation>
    <scope>REVIEW</scope>
</reference>
<reference key="18">
    <citation type="journal article" date="2013" name="Plant Physiol.">
        <title>Modified Clp protease complex in the ClpP3 null mutant and consequences for chloroplast development and function in Arabidopsis.</title>
        <authorList>
            <person name="Kim J."/>
            <person name="Olinares P.D."/>
            <person name="Oh S.H."/>
            <person name="Ghisaura S."/>
            <person name="Poliakov A."/>
            <person name="Ponnala L."/>
            <person name="van Wijk K.J."/>
        </authorList>
    </citation>
    <scope>FUNCTION</scope>
    <scope>DISRUPTION PHENOTYPE</scope>
</reference>
<reference key="19">
    <citation type="journal article" date="2015" name="J. Exp. Bot.">
        <title>The E3 ligase AtCHIP positively regulates Clp proteolytic subunit homeostasis.</title>
        <authorList>
            <person name="Wei J."/>
            <person name="Qiu X."/>
            <person name="Chen L."/>
            <person name="Hu W."/>
            <person name="Hu R."/>
            <person name="Chen J."/>
            <person name="Sun L."/>
            <person name="Li L."/>
            <person name="Zhang H."/>
            <person name="Lv Z."/>
            <person name="Shen G."/>
        </authorList>
    </citation>
    <scope>INTERACTION WITH CHIP</scope>
    <scope>UBIQUITINATION</scope>
</reference>
<protein>
    <recommendedName>
        <fullName evidence="12">ATP-dependent Clp protease proteolytic subunit 3, chloroplastic</fullName>
        <ecNumber>3.4.21.92</ecNumber>
    </recommendedName>
    <alternativeName>
        <fullName evidence="12">Endopeptidase ClpP3</fullName>
        <shortName>nClpP3</shortName>
    </alternativeName>
    <alternativeName>
        <fullName>nClpP4</fullName>
    </alternativeName>
</protein>
<dbReference type="EC" id="3.4.21.92"/>
<dbReference type="EMBL" id="AF032123">
    <property type="protein sequence ID" value="AAC35489.1"/>
    <property type="molecule type" value="mRNA"/>
</dbReference>
<dbReference type="EMBL" id="AB022328">
    <property type="protein sequence ID" value="BAA82067.1"/>
    <property type="molecule type" value="mRNA"/>
</dbReference>
<dbReference type="EMBL" id="AC013288">
    <property type="protein sequence ID" value="AAG60075.1"/>
    <property type="molecule type" value="Genomic_DNA"/>
</dbReference>
<dbReference type="EMBL" id="AC079285">
    <property type="protein sequence ID" value="AAG51173.1"/>
    <property type="molecule type" value="Genomic_DNA"/>
</dbReference>
<dbReference type="EMBL" id="CP002684">
    <property type="protein sequence ID" value="AEE34543.1"/>
    <property type="molecule type" value="Genomic_DNA"/>
</dbReference>
<dbReference type="EMBL" id="AF370528">
    <property type="protein sequence ID" value="AAK48955.1"/>
    <property type="molecule type" value="mRNA"/>
</dbReference>
<dbReference type="EMBL" id="AY072526">
    <property type="protein sequence ID" value="AAL66941.1"/>
    <property type="molecule type" value="mRNA"/>
</dbReference>
<dbReference type="EMBL" id="AY087349">
    <property type="protein sequence ID" value="AAM64899.1"/>
    <property type="molecule type" value="mRNA"/>
</dbReference>
<dbReference type="PIR" id="T52041">
    <property type="entry name" value="T52041"/>
</dbReference>
<dbReference type="PIR" id="T52453">
    <property type="entry name" value="T52453"/>
</dbReference>
<dbReference type="RefSeq" id="NP_564880.1">
    <property type="nucleotide sequence ID" value="NM_105338.4"/>
</dbReference>
<dbReference type="SMR" id="Q9SXJ6"/>
<dbReference type="BioGRID" id="28206">
    <property type="interactions" value="8"/>
</dbReference>
<dbReference type="FunCoup" id="Q9SXJ6">
    <property type="interactions" value="1044"/>
</dbReference>
<dbReference type="IntAct" id="Q9SXJ6">
    <property type="interactions" value="1"/>
</dbReference>
<dbReference type="STRING" id="3702.Q9SXJ6"/>
<dbReference type="MEROPS" id="S14.A03"/>
<dbReference type="iPTMnet" id="Q9SXJ6"/>
<dbReference type="PaxDb" id="3702-AT1G66670.1"/>
<dbReference type="ProteomicsDB" id="246590"/>
<dbReference type="EnsemblPlants" id="AT1G66670.1">
    <property type="protein sequence ID" value="AT1G66670.1"/>
    <property type="gene ID" value="AT1G66670"/>
</dbReference>
<dbReference type="GeneID" id="842985"/>
<dbReference type="Gramene" id="AT1G66670.1">
    <property type="protein sequence ID" value="AT1G66670.1"/>
    <property type="gene ID" value="AT1G66670"/>
</dbReference>
<dbReference type="KEGG" id="ath:AT1G66670"/>
<dbReference type="Araport" id="AT1G66670"/>
<dbReference type="TAIR" id="AT1G66670">
    <property type="gene designation" value="CLPP3"/>
</dbReference>
<dbReference type="eggNOG" id="KOG0840">
    <property type="taxonomic scope" value="Eukaryota"/>
</dbReference>
<dbReference type="HOGENOM" id="CLU_058707_1_0_1"/>
<dbReference type="InParanoid" id="Q9SXJ6"/>
<dbReference type="OMA" id="TKVWDLW"/>
<dbReference type="OrthoDB" id="2017408at2759"/>
<dbReference type="PhylomeDB" id="Q9SXJ6"/>
<dbReference type="PRO" id="PR:Q9SXJ6"/>
<dbReference type="Proteomes" id="UP000006548">
    <property type="component" value="Chromosome 1"/>
</dbReference>
<dbReference type="ExpressionAtlas" id="Q9SXJ6">
    <property type="expression patterns" value="baseline and differential"/>
</dbReference>
<dbReference type="GO" id="GO:0009507">
    <property type="term" value="C:chloroplast"/>
    <property type="evidence" value="ECO:0007005"/>
    <property type="project" value="TAIR"/>
</dbReference>
<dbReference type="GO" id="GO:0009941">
    <property type="term" value="C:chloroplast envelope"/>
    <property type="evidence" value="ECO:0007005"/>
    <property type="project" value="TAIR"/>
</dbReference>
<dbReference type="GO" id="GO:0009570">
    <property type="term" value="C:chloroplast stroma"/>
    <property type="evidence" value="ECO:0007005"/>
    <property type="project" value="TAIR"/>
</dbReference>
<dbReference type="GO" id="GO:0009534">
    <property type="term" value="C:chloroplast thylakoid"/>
    <property type="evidence" value="ECO:0000314"/>
    <property type="project" value="TAIR"/>
</dbReference>
<dbReference type="GO" id="GO:0009840">
    <property type="term" value="C:chloroplastic endopeptidase Clp complex"/>
    <property type="evidence" value="ECO:0000314"/>
    <property type="project" value="TAIR"/>
</dbReference>
<dbReference type="GO" id="GO:0009532">
    <property type="term" value="C:plastid stroma"/>
    <property type="evidence" value="ECO:0000314"/>
    <property type="project" value="TAIR"/>
</dbReference>
<dbReference type="GO" id="GO:0004176">
    <property type="term" value="F:ATP-dependent peptidase activity"/>
    <property type="evidence" value="ECO:0007669"/>
    <property type="project" value="InterPro"/>
</dbReference>
<dbReference type="GO" id="GO:0004252">
    <property type="term" value="F:serine-type endopeptidase activity"/>
    <property type="evidence" value="ECO:0007669"/>
    <property type="project" value="UniProtKB-EC"/>
</dbReference>
<dbReference type="GO" id="GO:0006508">
    <property type="term" value="P:proteolysis"/>
    <property type="evidence" value="ECO:0007669"/>
    <property type="project" value="UniProtKB-KW"/>
</dbReference>
<dbReference type="CDD" id="cd07017">
    <property type="entry name" value="S14_ClpP_2"/>
    <property type="match status" value="1"/>
</dbReference>
<dbReference type="FunFam" id="3.90.226.10:FF:000001">
    <property type="entry name" value="ATP-dependent Clp protease proteolytic subunit"/>
    <property type="match status" value="1"/>
</dbReference>
<dbReference type="Gene3D" id="3.90.226.10">
    <property type="entry name" value="2-enoyl-CoA Hydratase, Chain A, domain 1"/>
    <property type="match status" value="1"/>
</dbReference>
<dbReference type="HAMAP" id="MF_00444">
    <property type="entry name" value="ClpP"/>
    <property type="match status" value="1"/>
</dbReference>
<dbReference type="InterPro" id="IPR001907">
    <property type="entry name" value="ClpP"/>
</dbReference>
<dbReference type="InterPro" id="IPR029045">
    <property type="entry name" value="ClpP/crotonase-like_dom_sf"/>
</dbReference>
<dbReference type="InterPro" id="IPR023562">
    <property type="entry name" value="ClpP/TepA"/>
</dbReference>
<dbReference type="InterPro" id="IPR033135">
    <property type="entry name" value="ClpP_His_AS"/>
</dbReference>
<dbReference type="InterPro" id="IPR018215">
    <property type="entry name" value="ClpP_Ser_AS"/>
</dbReference>
<dbReference type="NCBIfam" id="NF001368">
    <property type="entry name" value="PRK00277.1"/>
    <property type="match status" value="1"/>
</dbReference>
<dbReference type="PANTHER" id="PTHR10381">
    <property type="entry name" value="ATP-DEPENDENT CLP PROTEASE PROTEOLYTIC SUBUNIT"/>
    <property type="match status" value="1"/>
</dbReference>
<dbReference type="PANTHER" id="PTHR10381:SF50">
    <property type="entry name" value="ATP-DEPENDENT CLP PROTEASE PROTEOLYTIC SUBUNIT 3, CHLOROPLASTIC"/>
    <property type="match status" value="1"/>
</dbReference>
<dbReference type="Pfam" id="PF00574">
    <property type="entry name" value="CLP_protease"/>
    <property type="match status" value="1"/>
</dbReference>
<dbReference type="PRINTS" id="PR00127">
    <property type="entry name" value="CLPPROTEASEP"/>
</dbReference>
<dbReference type="SUPFAM" id="SSF52096">
    <property type="entry name" value="ClpP/crotonase"/>
    <property type="match status" value="1"/>
</dbReference>
<dbReference type="PROSITE" id="PS00382">
    <property type="entry name" value="CLP_PROTEASE_HIS"/>
    <property type="match status" value="1"/>
</dbReference>
<dbReference type="PROSITE" id="PS00381">
    <property type="entry name" value="CLP_PROTEASE_SER"/>
    <property type="match status" value="1"/>
</dbReference>
<comment type="function">
    <text evidence="1 10">Cleaves peptides in various proteins in a process that requires ATP hydrolysis. Has a chymotrypsin-like activity. Plays a major role in the degradation of misfolded proteins (By similarity). In the absence of CLPP3, modified ClpPR core(s) could be formed, albeit at strongly reduced levels (PubMed:23548781).</text>
</comment>
<comment type="catalytic activity">
    <reaction>
        <text>Hydrolysis of proteins to small peptides in the presence of ATP and magnesium. alpha-casein is the usual test substrate. In the absence of ATP, only oligopeptides shorter than five residues are hydrolyzed (such as succinyl-Leu-Tyr-|-NHMec, and Leu-Tyr-Leu-|-Tyr-Trp, in which cleavage of the -Tyr-|-Leu- and -Tyr-|-Trp bonds also occurs).</text>
        <dbReference type="EC" id="3.4.21.92"/>
    </reaction>
</comment>
<comment type="subunit">
    <text evidence="4 6 7 8 9 11">Component of the chloroplastic Clp protease core complex which consist of at least 16 proteins: CLPP4 (3 copies), CLPP5 (3 copies), CLPR4 (2 copies), ClpP1 (1 copy), CLPP6 (1 copy), CLPR2 (1 copy), CLPT1 (1 copy), CLPT2 (1 copy) and 3 copies of CLPP3 and/or CLPR1 and/or CLPR3 (PubMed:11278690, PubMed:14593120, PubMed:16766689). The core complex is organized in two heptameric rings, one containing CLPP3,4,5,6 in a 1:2:3:1 ratio and the other CLPP1 and CLPR1,2,3,4 in a 3:1:1:1:1 ratio (PubMed:21712416). Interacts with CHIP (PubMed:26085677).</text>
</comment>
<comment type="subcellular location">
    <subcellularLocation>
        <location evidence="5 6">Plastid</location>
        <location evidence="5 6">Chloroplast stroma</location>
    </subcellularLocation>
</comment>
<comment type="tissue specificity">
    <text evidence="5">Mostly expressed in leaves. Also detected in stems, and to a lower extent, in roots (at protein level).</text>
</comment>
<comment type="induction">
    <text evidence="3 5">Repressed in darkness. Accumulates during leaf senescence. Induced during cold acclimation (at protein level).</text>
</comment>
<comment type="PTM">
    <text evidence="11">Ubiquitinated in vitro by CHIP.</text>
</comment>
<comment type="disruption phenotype">
    <text>Delayed embryo development and seedling lethality. Can be rescued by adding sugars to the growth medium.</text>
</comment>
<comment type="similarity">
    <text evidence="13">Belongs to the peptidase S14 family.</text>
</comment>
<sequence length="309" mass="33925">MEMSLRLASSSTSNPICLLNPGKNLNFPIRNHRIPKTSKPFCVRSSMSLSKPPRQTLSSNWDVSSFSIDSVAQSPSRLPSFEELDTTNMLLRQRIVFLGSQVDDMTADLVISQLLLLDAEDSERDITLFINSPGGSITAGMGIYDAMKQCKADVSTVCLGLAASMGAFLLASGSKGKRYCMPNSKVMIHQPLGTAGGKATEMSIRIREMMYHKIKLNKIFSRITGKPESEIESDTDRDNFLNPWEAKEYGLIDAVIDDGKPGLIAPIGDGTPPPKTKVWDLWKVEGTKKDNTNLPSERSMTQNGYAAIE</sequence>
<evidence type="ECO:0000250" key="1"/>
<evidence type="ECO:0000256" key="2">
    <source>
        <dbReference type="SAM" id="MobiDB-lite"/>
    </source>
</evidence>
<evidence type="ECO:0000269" key="3">
    <source>
    </source>
</evidence>
<evidence type="ECO:0000269" key="4">
    <source>
    </source>
</evidence>
<evidence type="ECO:0000269" key="5">
    <source>
    </source>
</evidence>
<evidence type="ECO:0000269" key="6">
    <source>
    </source>
</evidence>
<evidence type="ECO:0000269" key="7">
    <source>
    </source>
</evidence>
<evidence type="ECO:0000269" key="8">
    <source>
    </source>
</evidence>
<evidence type="ECO:0000269" key="9">
    <source>
    </source>
</evidence>
<evidence type="ECO:0000269" key="10">
    <source>
    </source>
</evidence>
<evidence type="ECO:0000269" key="11">
    <source>
    </source>
</evidence>
<evidence type="ECO:0000303" key="12">
    <source>
    </source>
</evidence>
<evidence type="ECO:0000305" key="13"/>
<evidence type="ECO:0000312" key="14">
    <source>
        <dbReference type="Araport" id="AT1G66670"/>
    </source>
</evidence>
<evidence type="ECO:0000312" key="15">
    <source>
        <dbReference type="EMBL" id="AAG51173.1"/>
    </source>
</evidence>
<evidence type="ECO:0000312" key="16">
    <source>
        <dbReference type="EMBL" id="AAG60075.1"/>
    </source>
</evidence>
<evidence type="ECO:0007744" key="17">
    <source>
    </source>
</evidence>
<evidence type="ECO:0007744" key="18">
    <source>
    </source>
</evidence>
<accession>Q9SXJ6</accession>
<accession>O82421</accession>
<accession>Q94JY6</accession>
<name>CLPP3_ARATH</name>